<dbReference type="EMBL" id="CP000803">
    <property type="protein sequence ID" value="ABU61491.1"/>
    <property type="molecule type" value="Genomic_DNA"/>
</dbReference>
<dbReference type="RefSeq" id="WP_003015770.1">
    <property type="nucleotide sequence ID" value="NC_009749.1"/>
</dbReference>
<dbReference type="SMR" id="A7NBY8"/>
<dbReference type="KEGG" id="fta:FTA_1015"/>
<dbReference type="HOGENOM" id="CLU_033123_0_0_6"/>
<dbReference type="GO" id="GO:0009376">
    <property type="term" value="C:HslUV protease complex"/>
    <property type="evidence" value="ECO:0007669"/>
    <property type="project" value="UniProtKB-UniRule"/>
</dbReference>
<dbReference type="GO" id="GO:0005524">
    <property type="term" value="F:ATP binding"/>
    <property type="evidence" value="ECO:0007669"/>
    <property type="project" value="UniProtKB-UniRule"/>
</dbReference>
<dbReference type="GO" id="GO:0016887">
    <property type="term" value="F:ATP hydrolysis activity"/>
    <property type="evidence" value="ECO:0007669"/>
    <property type="project" value="InterPro"/>
</dbReference>
<dbReference type="GO" id="GO:0008233">
    <property type="term" value="F:peptidase activity"/>
    <property type="evidence" value="ECO:0007669"/>
    <property type="project" value="InterPro"/>
</dbReference>
<dbReference type="GO" id="GO:0036402">
    <property type="term" value="F:proteasome-activating activity"/>
    <property type="evidence" value="ECO:0007669"/>
    <property type="project" value="UniProtKB-UniRule"/>
</dbReference>
<dbReference type="GO" id="GO:0043335">
    <property type="term" value="P:protein unfolding"/>
    <property type="evidence" value="ECO:0007669"/>
    <property type="project" value="UniProtKB-UniRule"/>
</dbReference>
<dbReference type="GO" id="GO:0051603">
    <property type="term" value="P:proteolysis involved in protein catabolic process"/>
    <property type="evidence" value="ECO:0007669"/>
    <property type="project" value="TreeGrafter"/>
</dbReference>
<dbReference type="CDD" id="cd19498">
    <property type="entry name" value="RecA-like_HslU"/>
    <property type="match status" value="1"/>
</dbReference>
<dbReference type="FunFam" id="3.40.50.300:FF:000213">
    <property type="entry name" value="ATP-dependent protease ATPase subunit HslU"/>
    <property type="match status" value="1"/>
</dbReference>
<dbReference type="FunFam" id="3.40.50.300:FF:000220">
    <property type="entry name" value="ATP-dependent protease ATPase subunit HslU"/>
    <property type="match status" value="1"/>
</dbReference>
<dbReference type="Gene3D" id="1.10.8.60">
    <property type="match status" value="1"/>
</dbReference>
<dbReference type="Gene3D" id="3.40.50.300">
    <property type="entry name" value="P-loop containing nucleotide triphosphate hydrolases"/>
    <property type="match status" value="2"/>
</dbReference>
<dbReference type="HAMAP" id="MF_00249">
    <property type="entry name" value="HslU"/>
    <property type="match status" value="1"/>
</dbReference>
<dbReference type="InterPro" id="IPR003593">
    <property type="entry name" value="AAA+_ATPase"/>
</dbReference>
<dbReference type="InterPro" id="IPR050052">
    <property type="entry name" value="ATP-dep_Clp_protease_ClpX"/>
</dbReference>
<dbReference type="InterPro" id="IPR003959">
    <property type="entry name" value="ATPase_AAA_core"/>
</dbReference>
<dbReference type="InterPro" id="IPR019489">
    <property type="entry name" value="Clp_ATPase_C"/>
</dbReference>
<dbReference type="InterPro" id="IPR004491">
    <property type="entry name" value="HslU"/>
</dbReference>
<dbReference type="InterPro" id="IPR027417">
    <property type="entry name" value="P-loop_NTPase"/>
</dbReference>
<dbReference type="NCBIfam" id="TIGR00390">
    <property type="entry name" value="hslU"/>
    <property type="match status" value="1"/>
</dbReference>
<dbReference type="NCBIfam" id="NF003544">
    <property type="entry name" value="PRK05201.1"/>
    <property type="match status" value="1"/>
</dbReference>
<dbReference type="PANTHER" id="PTHR48102">
    <property type="entry name" value="ATP-DEPENDENT CLP PROTEASE ATP-BINDING SUBUNIT CLPX-LIKE, MITOCHONDRIAL-RELATED"/>
    <property type="match status" value="1"/>
</dbReference>
<dbReference type="PANTHER" id="PTHR48102:SF3">
    <property type="entry name" value="ATP-DEPENDENT PROTEASE ATPASE SUBUNIT HSLU"/>
    <property type="match status" value="1"/>
</dbReference>
<dbReference type="Pfam" id="PF00004">
    <property type="entry name" value="AAA"/>
    <property type="match status" value="1"/>
</dbReference>
<dbReference type="Pfam" id="PF07724">
    <property type="entry name" value="AAA_2"/>
    <property type="match status" value="1"/>
</dbReference>
<dbReference type="SMART" id="SM00382">
    <property type="entry name" value="AAA"/>
    <property type="match status" value="1"/>
</dbReference>
<dbReference type="SMART" id="SM01086">
    <property type="entry name" value="ClpB_D2-small"/>
    <property type="match status" value="1"/>
</dbReference>
<dbReference type="SUPFAM" id="SSF52540">
    <property type="entry name" value="P-loop containing nucleoside triphosphate hydrolases"/>
    <property type="match status" value="1"/>
</dbReference>
<protein>
    <recommendedName>
        <fullName evidence="1">ATP-dependent protease ATPase subunit HslU</fullName>
    </recommendedName>
    <alternativeName>
        <fullName evidence="1">Unfoldase HslU</fullName>
    </alternativeName>
</protein>
<keyword id="KW-0067">ATP-binding</keyword>
<keyword id="KW-0143">Chaperone</keyword>
<keyword id="KW-0963">Cytoplasm</keyword>
<keyword id="KW-0547">Nucleotide-binding</keyword>
<keyword id="KW-0346">Stress response</keyword>
<accession>A7NBY8</accession>
<comment type="function">
    <text evidence="1">ATPase subunit of a proteasome-like degradation complex; this subunit has chaperone activity. The binding of ATP and its subsequent hydrolysis by HslU are essential for unfolding of protein substrates subsequently hydrolyzed by HslV. HslU recognizes the N-terminal part of its protein substrates and unfolds these before they are guided to HslV for hydrolysis.</text>
</comment>
<comment type="subunit">
    <text evidence="1">A double ring-shaped homohexamer of HslV is capped on each side by a ring-shaped HslU homohexamer. The assembly of the HslU/HslV complex is dependent on binding of ATP.</text>
</comment>
<comment type="subcellular location">
    <subcellularLocation>
        <location evidence="1">Cytoplasm</location>
    </subcellularLocation>
</comment>
<comment type="similarity">
    <text evidence="1">Belongs to the ClpX chaperone family. HslU subfamily.</text>
</comment>
<reference key="1">
    <citation type="journal article" date="2009" name="PLoS ONE">
        <title>Complete genome sequence of Francisella tularensis subspecies holarctica FTNF002-00.</title>
        <authorList>
            <person name="Barabote R.D."/>
            <person name="Xie G."/>
            <person name="Brettin T.S."/>
            <person name="Hinrichs S.H."/>
            <person name="Fey P.D."/>
            <person name="Jay J.J."/>
            <person name="Engle J.L."/>
            <person name="Godbole S.D."/>
            <person name="Noronha J.M."/>
            <person name="Scheuermann R.H."/>
            <person name="Zhou L.W."/>
            <person name="Lion C."/>
            <person name="Dempsey M.P."/>
        </authorList>
    </citation>
    <scope>NUCLEOTIDE SEQUENCE [LARGE SCALE GENOMIC DNA]</scope>
    <source>
        <strain>FTNF002-00 / FTA</strain>
    </source>
</reference>
<sequence length="455" mass="51237">MTQIMTPKTIVHELERHIIGQNDAKKAVAIALRNRWRRMQLDNEMRQEVTPKNILMIGPTGVGKTEIARRLAKLADAPFIKVEATKFTEVGYVGKDVESIIRDLVETAVKMKREEAKEKVTEKAARLAEDRILDVLIPPARTSESKVGFANEPAEDAASKKEKENKTREIFRKKIQNGELDDKEIEIEVAVAPKTIGVMGPPGMEDMTSQLQDLFSSLSTDKKKNKKMRIKDAIKLAQDEEAAKLVNEEDIKARALEAVEQNGIVFLDEIDKVCRKSSNSGADVSREGVQRDLLPLVEGSTVSTKYGVIKTDHILFIASGAFHVAKPSDLIPELQGRLPIRVELKSLEIEDFVRILREPDCSILKQYIALMKTEGIDLSFEEDAIRKIAEIAYKVNEEVENIGARRLHTVMERLLEKISFDAPELVEKNINITTDYVNEKLGNLVKNKDLSQYIL</sequence>
<gene>
    <name evidence="1" type="primary">hslU</name>
    <name type="ordered locus">FTA_1015</name>
</gene>
<evidence type="ECO:0000255" key="1">
    <source>
        <dbReference type="HAMAP-Rule" id="MF_00249"/>
    </source>
</evidence>
<evidence type="ECO:0000256" key="2">
    <source>
        <dbReference type="SAM" id="MobiDB-lite"/>
    </source>
</evidence>
<feature type="chain" id="PRO_1000012739" description="ATP-dependent protease ATPase subunit HslU">
    <location>
        <begin position="1"/>
        <end position="455"/>
    </location>
</feature>
<feature type="region of interest" description="Disordered" evidence="2">
    <location>
        <begin position="144"/>
        <end position="163"/>
    </location>
</feature>
<feature type="binding site" evidence="1">
    <location>
        <position position="19"/>
    </location>
    <ligand>
        <name>ATP</name>
        <dbReference type="ChEBI" id="CHEBI:30616"/>
    </ligand>
</feature>
<feature type="binding site" evidence="1">
    <location>
        <begin position="61"/>
        <end position="66"/>
    </location>
    <ligand>
        <name>ATP</name>
        <dbReference type="ChEBI" id="CHEBI:30616"/>
    </ligand>
</feature>
<feature type="binding site" evidence="1">
    <location>
        <position position="268"/>
    </location>
    <ligand>
        <name>ATP</name>
        <dbReference type="ChEBI" id="CHEBI:30616"/>
    </ligand>
</feature>
<feature type="binding site" evidence="1">
    <location>
        <position position="333"/>
    </location>
    <ligand>
        <name>ATP</name>
        <dbReference type="ChEBI" id="CHEBI:30616"/>
    </ligand>
</feature>
<feature type="binding site" evidence="1">
    <location>
        <position position="405"/>
    </location>
    <ligand>
        <name>ATP</name>
        <dbReference type="ChEBI" id="CHEBI:30616"/>
    </ligand>
</feature>
<proteinExistence type="inferred from homology"/>
<organism>
    <name type="scientific">Francisella tularensis subsp. holarctica (strain FTNF002-00 / FTA)</name>
    <dbReference type="NCBI Taxonomy" id="458234"/>
    <lineage>
        <taxon>Bacteria</taxon>
        <taxon>Pseudomonadati</taxon>
        <taxon>Pseudomonadota</taxon>
        <taxon>Gammaproteobacteria</taxon>
        <taxon>Thiotrichales</taxon>
        <taxon>Francisellaceae</taxon>
        <taxon>Francisella</taxon>
    </lineage>
</organism>
<name>HSLU_FRATF</name>